<name>RS20_HALH5</name>
<dbReference type="EMBL" id="BA000004">
    <property type="protein sequence ID" value="BAB05058.1"/>
    <property type="molecule type" value="Genomic_DNA"/>
</dbReference>
<dbReference type="PIR" id="C83817">
    <property type="entry name" value="C83817"/>
</dbReference>
<dbReference type="SMR" id="Q9KD79"/>
<dbReference type="STRING" id="272558.gene:10727233"/>
<dbReference type="KEGG" id="bha:BH1339"/>
<dbReference type="eggNOG" id="COG0268">
    <property type="taxonomic scope" value="Bacteria"/>
</dbReference>
<dbReference type="HOGENOM" id="CLU_160655_1_0_9"/>
<dbReference type="Proteomes" id="UP000001258">
    <property type="component" value="Chromosome"/>
</dbReference>
<dbReference type="GO" id="GO:0005829">
    <property type="term" value="C:cytosol"/>
    <property type="evidence" value="ECO:0007669"/>
    <property type="project" value="TreeGrafter"/>
</dbReference>
<dbReference type="GO" id="GO:0015935">
    <property type="term" value="C:small ribosomal subunit"/>
    <property type="evidence" value="ECO:0007669"/>
    <property type="project" value="TreeGrafter"/>
</dbReference>
<dbReference type="GO" id="GO:0070181">
    <property type="term" value="F:small ribosomal subunit rRNA binding"/>
    <property type="evidence" value="ECO:0007669"/>
    <property type="project" value="TreeGrafter"/>
</dbReference>
<dbReference type="GO" id="GO:0003735">
    <property type="term" value="F:structural constituent of ribosome"/>
    <property type="evidence" value="ECO:0007669"/>
    <property type="project" value="InterPro"/>
</dbReference>
<dbReference type="GO" id="GO:0006412">
    <property type="term" value="P:translation"/>
    <property type="evidence" value="ECO:0007669"/>
    <property type="project" value="UniProtKB-UniRule"/>
</dbReference>
<dbReference type="FunFam" id="1.20.58.110:FF:000001">
    <property type="entry name" value="30S ribosomal protein S20"/>
    <property type="match status" value="1"/>
</dbReference>
<dbReference type="Gene3D" id="1.20.58.110">
    <property type="entry name" value="Ribosomal protein S20"/>
    <property type="match status" value="1"/>
</dbReference>
<dbReference type="HAMAP" id="MF_00500">
    <property type="entry name" value="Ribosomal_bS20"/>
    <property type="match status" value="1"/>
</dbReference>
<dbReference type="InterPro" id="IPR002583">
    <property type="entry name" value="Ribosomal_bS20"/>
</dbReference>
<dbReference type="InterPro" id="IPR036510">
    <property type="entry name" value="Ribosomal_bS20_sf"/>
</dbReference>
<dbReference type="NCBIfam" id="TIGR00029">
    <property type="entry name" value="S20"/>
    <property type="match status" value="1"/>
</dbReference>
<dbReference type="PANTHER" id="PTHR33398">
    <property type="entry name" value="30S RIBOSOMAL PROTEIN S20"/>
    <property type="match status" value="1"/>
</dbReference>
<dbReference type="PANTHER" id="PTHR33398:SF1">
    <property type="entry name" value="SMALL RIBOSOMAL SUBUNIT PROTEIN BS20C"/>
    <property type="match status" value="1"/>
</dbReference>
<dbReference type="Pfam" id="PF01649">
    <property type="entry name" value="Ribosomal_S20p"/>
    <property type="match status" value="1"/>
</dbReference>
<dbReference type="SUPFAM" id="SSF46992">
    <property type="entry name" value="Ribosomal protein S20"/>
    <property type="match status" value="1"/>
</dbReference>
<feature type="chain" id="PRO_0000167915" description="Small ribosomal subunit protein bS20">
    <location>
        <begin position="1"/>
        <end position="91"/>
    </location>
</feature>
<feature type="region of interest" description="Disordered" evidence="2">
    <location>
        <begin position="72"/>
        <end position="91"/>
    </location>
</feature>
<proteinExistence type="inferred from homology"/>
<comment type="function">
    <text evidence="1">Binds directly to 16S ribosomal RNA.</text>
</comment>
<comment type="similarity">
    <text evidence="1">Belongs to the bacterial ribosomal protein bS20 family.</text>
</comment>
<organism>
    <name type="scientific">Halalkalibacterium halodurans (strain ATCC BAA-125 / DSM 18197 / FERM 7344 / JCM 9153 / C-125)</name>
    <name type="common">Bacillus halodurans</name>
    <dbReference type="NCBI Taxonomy" id="272558"/>
    <lineage>
        <taxon>Bacteria</taxon>
        <taxon>Bacillati</taxon>
        <taxon>Bacillota</taxon>
        <taxon>Bacilli</taxon>
        <taxon>Bacillales</taxon>
        <taxon>Bacillaceae</taxon>
        <taxon>Halalkalibacterium (ex Joshi et al. 2022)</taxon>
    </lineage>
</organism>
<keyword id="KW-1185">Reference proteome</keyword>
<keyword id="KW-0687">Ribonucleoprotein</keyword>
<keyword id="KW-0689">Ribosomal protein</keyword>
<keyword id="KW-0694">RNA-binding</keyword>
<keyword id="KW-0699">rRNA-binding</keyword>
<sequence length="91" mass="9902">MKGNANIKSAIKRVKTNEKRRIQNASVKSALRTAIKQFEAKVENNDAEAAKAAFVEATKKLDKAANKGLIHKNAASRQKSRLAKKLNGLSA</sequence>
<protein>
    <recommendedName>
        <fullName evidence="1">Small ribosomal subunit protein bS20</fullName>
    </recommendedName>
    <alternativeName>
        <fullName evidence="3">30S ribosomal protein S20</fullName>
    </alternativeName>
</protein>
<evidence type="ECO:0000255" key="1">
    <source>
        <dbReference type="HAMAP-Rule" id="MF_00500"/>
    </source>
</evidence>
<evidence type="ECO:0000256" key="2">
    <source>
        <dbReference type="SAM" id="MobiDB-lite"/>
    </source>
</evidence>
<evidence type="ECO:0000305" key="3"/>
<gene>
    <name evidence="1" type="primary">rpsT</name>
    <name type="ordered locus">BH1339</name>
</gene>
<reference key="1">
    <citation type="journal article" date="2000" name="Nucleic Acids Res.">
        <title>Complete genome sequence of the alkaliphilic bacterium Bacillus halodurans and genomic sequence comparison with Bacillus subtilis.</title>
        <authorList>
            <person name="Takami H."/>
            <person name="Nakasone K."/>
            <person name="Takaki Y."/>
            <person name="Maeno G."/>
            <person name="Sasaki R."/>
            <person name="Masui N."/>
            <person name="Fuji F."/>
            <person name="Hirama C."/>
            <person name="Nakamura Y."/>
            <person name="Ogasawara N."/>
            <person name="Kuhara S."/>
            <person name="Horikoshi K."/>
        </authorList>
    </citation>
    <scope>NUCLEOTIDE SEQUENCE [LARGE SCALE GENOMIC DNA]</scope>
    <source>
        <strain>ATCC BAA-125 / DSM 18197 / FERM 7344 / JCM 9153 / C-125</strain>
    </source>
</reference>
<accession>Q9KD79</accession>